<reference key="1">
    <citation type="submission" date="2006-12" db="EMBL/GenBank/DDBJ databases">
        <title>Bifidobacterium adolescentis complete genome sequence.</title>
        <authorList>
            <person name="Suzuki T."/>
            <person name="Tsuda Y."/>
            <person name="Kanou N."/>
            <person name="Inoue T."/>
            <person name="Kumazaki K."/>
            <person name="Nagano S."/>
            <person name="Hirai S."/>
            <person name="Tanaka K."/>
            <person name="Watanabe K."/>
        </authorList>
    </citation>
    <scope>NUCLEOTIDE SEQUENCE [LARGE SCALE GENOMIC DNA]</scope>
    <source>
        <strain>ATCC 15703 / DSM 20083 / NCTC 11814 / E194a</strain>
    </source>
</reference>
<name>ATPA_BIFAA</name>
<keyword id="KW-0066">ATP synthesis</keyword>
<keyword id="KW-0067">ATP-binding</keyword>
<keyword id="KW-1003">Cell membrane</keyword>
<keyword id="KW-0139">CF(1)</keyword>
<keyword id="KW-0375">Hydrogen ion transport</keyword>
<keyword id="KW-0406">Ion transport</keyword>
<keyword id="KW-0472">Membrane</keyword>
<keyword id="KW-0547">Nucleotide-binding</keyword>
<keyword id="KW-1185">Reference proteome</keyword>
<keyword id="KW-1278">Translocase</keyword>
<keyword id="KW-0813">Transport</keyword>
<accession>A1A3C7</accession>
<proteinExistence type="inferred from homology"/>
<protein>
    <recommendedName>
        <fullName evidence="1">ATP synthase subunit alpha</fullName>
        <ecNumber evidence="1">7.1.2.2</ecNumber>
    </recommendedName>
    <alternativeName>
        <fullName evidence="1">ATP synthase F1 sector subunit alpha</fullName>
    </alternativeName>
    <alternativeName>
        <fullName evidence="1">F-ATPase subunit alpha</fullName>
    </alternativeName>
</protein>
<dbReference type="EC" id="7.1.2.2" evidence="1"/>
<dbReference type="EMBL" id="AP009256">
    <property type="protein sequence ID" value="BAF40210.1"/>
    <property type="molecule type" value="Genomic_DNA"/>
</dbReference>
<dbReference type="RefSeq" id="WP_003809860.1">
    <property type="nucleotide sequence ID" value="NZ_CAXVNC010000003.1"/>
</dbReference>
<dbReference type="SMR" id="A1A3C7"/>
<dbReference type="STRING" id="367928.BAD_1429"/>
<dbReference type="PaxDb" id="1680-BADO_1602"/>
<dbReference type="GeneID" id="4557695"/>
<dbReference type="KEGG" id="bad:BAD_1429"/>
<dbReference type="HOGENOM" id="CLU_010091_2_1_11"/>
<dbReference type="Proteomes" id="UP000008702">
    <property type="component" value="Chromosome"/>
</dbReference>
<dbReference type="GO" id="GO:0005886">
    <property type="term" value="C:plasma membrane"/>
    <property type="evidence" value="ECO:0007669"/>
    <property type="project" value="UniProtKB-SubCell"/>
</dbReference>
<dbReference type="GO" id="GO:0045259">
    <property type="term" value="C:proton-transporting ATP synthase complex"/>
    <property type="evidence" value="ECO:0007669"/>
    <property type="project" value="UniProtKB-KW"/>
</dbReference>
<dbReference type="GO" id="GO:0043531">
    <property type="term" value="F:ADP binding"/>
    <property type="evidence" value="ECO:0007669"/>
    <property type="project" value="TreeGrafter"/>
</dbReference>
<dbReference type="GO" id="GO:0005524">
    <property type="term" value="F:ATP binding"/>
    <property type="evidence" value="ECO:0007669"/>
    <property type="project" value="UniProtKB-UniRule"/>
</dbReference>
<dbReference type="GO" id="GO:0046933">
    <property type="term" value="F:proton-transporting ATP synthase activity, rotational mechanism"/>
    <property type="evidence" value="ECO:0007669"/>
    <property type="project" value="UniProtKB-UniRule"/>
</dbReference>
<dbReference type="CDD" id="cd18113">
    <property type="entry name" value="ATP-synt_F1_alpha_C"/>
    <property type="match status" value="1"/>
</dbReference>
<dbReference type="CDD" id="cd18116">
    <property type="entry name" value="ATP-synt_F1_alpha_N"/>
    <property type="match status" value="1"/>
</dbReference>
<dbReference type="CDD" id="cd01132">
    <property type="entry name" value="F1-ATPase_alpha_CD"/>
    <property type="match status" value="1"/>
</dbReference>
<dbReference type="FunFam" id="1.20.150.20:FF:000001">
    <property type="entry name" value="ATP synthase subunit alpha"/>
    <property type="match status" value="1"/>
</dbReference>
<dbReference type="FunFam" id="3.40.50.300:FF:000002">
    <property type="entry name" value="ATP synthase subunit alpha"/>
    <property type="match status" value="1"/>
</dbReference>
<dbReference type="Gene3D" id="2.40.30.20">
    <property type="match status" value="1"/>
</dbReference>
<dbReference type="Gene3D" id="1.20.150.20">
    <property type="entry name" value="ATP synthase alpha/beta chain, C-terminal domain"/>
    <property type="match status" value="1"/>
</dbReference>
<dbReference type="Gene3D" id="3.40.50.300">
    <property type="entry name" value="P-loop containing nucleotide triphosphate hydrolases"/>
    <property type="match status" value="1"/>
</dbReference>
<dbReference type="HAMAP" id="MF_01346">
    <property type="entry name" value="ATP_synth_alpha_bact"/>
    <property type="match status" value="1"/>
</dbReference>
<dbReference type="InterPro" id="IPR023366">
    <property type="entry name" value="ATP_synth_asu-like_sf"/>
</dbReference>
<dbReference type="InterPro" id="IPR000793">
    <property type="entry name" value="ATP_synth_asu_C"/>
</dbReference>
<dbReference type="InterPro" id="IPR038376">
    <property type="entry name" value="ATP_synth_asu_C_sf"/>
</dbReference>
<dbReference type="InterPro" id="IPR033732">
    <property type="entry name" value="ATP_synth_F1_a_nt-bd_dom"/>
</dbReference>
<dbReference type="InterPro" id="IPR005294">
    <property type="entry name" value="ATP_synth_F1_asu"/>
</dbReference>
<dbReference type="InterPro" id="IPR020003">
    <property type="entry name" value="ATPase_a/bsu_AS"/>
</dbReference>
<dbReference type="InterPro" id="IPR004100">
    <property type="entry name" value="ATPase_F1/V1/A1_a/bsu_N"/>
</dbReference>
<dbReference type="InterPro" id="IPR036121">
    <property type="entry name" value="ATPase_F1/V1/A1_a/bsu_N_sf"/>
</dbReference>
<dbReference type="InterPro" id="IPR000194">
    <property type="entry name" value="ATPase_F1/V1/A1_a/bsu_nucl-bd"/>
</dbReference>
<dbReference type="InterPro" id="IPR027417">
    <property type="entry name" value="P-loop_NTPase"/>
</dbReference>
<dbReference type="NCBIfam" id="TIGR00962">
    <property type="entry name" value="atpA"/>
    <property type="match status" value="1"/>
</dbReference>
<dbReference type="NCBIfam" id="NF009884">
    <property type="entry name" value="PRK13343.1"/>
    <property type="match status" value="1"/>
</dbReference>
<dbReference type="PANTHER" id="PTHR48082">
    <property type="entry name" value="ATP SYNTHASE SUBUNIT ALPHA, MITOCHONDRIAL"/>
    <property type="match status" value="1"/>
</dbReference>
<dbReference type="PANTHER" id="PTHR48082:SF2">
    <property type="entry name" value="ATP SYNTHASE SUBUNIT ALPHA, MITOCHONDRIAL"/>
    <property type="match status" value="1"/>
</dbReference>
<dbReference type="Pfam" id="PF00006">
    <property type="entry name" value="ATP-synt_ab"/>
    <property type="match status" value="1"/>
</dbReference>
<dbReference type="Pfam" id="PF00306">
    <property type="entry name" value="ATP-synt_ab_C"/>
    <property type="match status" value="1"/>
</dbReference>
<dbReference type="Pfam" id="PF02874">
    <property type="entry name" value="ATP-synt_ab_N"/>
    <property type="match status" value="1"/>
</dbReference>
<dbReference type="SUPFAM" id="SSF47917">
    <property type="entry name" value="C-terminal domain of alpha and beta subunits of F1 ATP synthase"/>
    <property type="match status" value="1"/>
</dbReference>
<dbReference type="SUPFAM" id="SSF50615">
    <property type="entry name" value="N-terminal domain of alpha and beta subunits of F1 ATP synthase"/>
    <property type="match status" value="1"/>
</dbReference>
<dbReference type="SUPFAM" id="SSF52540">
    <property type="entry name" value="P-loop containing nucleoside triphosphate hydrolases"/>
    <property type="match status" value="1"/>
</dbReference>
<dbReference type="PROSITE" id="PS00152">
    <property type="entry name" value="ATPASE_ALPHA_BETA"/>
    <property type="match status" value="1"/>
</dbReference>
<comment type="function">
    <text evidence="1">Produces ATP from ADP in the presence of a proton gradient across the membrane. The alpha chain is a regulatory subunit.</text>
</comment>
<comment type="catalytic activity">
    <reaction evidence="1">
        <text>ATP + H2O + 4 H(+)(in) = ADP + phosphate + 5 H(+)(out)</text>
        <dbReference type="Rhea" id="RHEA:57720"/>
        <dbReference type="ChEBI" id="CHEBI:15377"/>
        <dbReference type="ChEBI" id="CHEBI:15378"/>
        <dbReference type="ChEBI" id="CHEBI:30616"/>
        <dbReference type="ChEBI" id="CHEBI:43474"/>
        <dbReference type="ChEBI" id="CHEBI:456216"/>
        <dbReference type="EC" id="7.1.2.2"/>
    </reaction>
</comment>
<comment type="subunit">
    <text evidence="1">F-type ATPases have 2 components, CF(1) - the catalytic core - and CF(0) - the membrane proton channel. CF(1) has five subunits: alpha(3), beta(3), gamma(1), delta(1), epsilon(1). CF(0) has three main subunits: a(1), b(2) and c(9-12). The alpha and beta chains form an alternating ring which encloses part of the gamma chain. CF(1) is attached to CF(0) by a central stalk formed by the gamma and epsilon chains, while a peripheral stalk is formed by the delta and b chains.</text>
</comment>
<comment type="subcellular location">
    <subcellularLocation>
        <location evidence="1">Cell membrane</location>
        <topology evidence="1">Peripheral membrane protein</topology>
    </subcellularLocation>
</comment>
<comment type="similarity">
    <text evidence="1">Belongs to the ATPase alpha/beta chains family.</text>
</comment>
<sequence>MAELTIDPTTIRKALDEFVESYKPSDTPTQEVGYVATAGDGIAHVTGLPGCMANELLTFEDGTLGLAFNLDAREIGVVILGDFTGIEEGQEVRRTGEVLSVPVGDGYLGRVVDPLGNPIDGLGEIKTEGRRILEAQAPDVMHRHPVDEPLSTGLKAIDAMTPIGRGQRQLIIGDRQTGKTAIAIDTIINQKRNWESGDPKKQVRCIYVAVGQKGSTIASVKQSLEEAGAMEYTTIVASPASDSAGFKYIAPYTGSAIGQHWMYNGKHVLIVFDDLSKQAEAYRSISLLLRRPPGREAYPGDVFYLHSRLLERCAKVSDDLGGGSMTGLPIVETKANDVSAYIPTNVISITDGQIFLQSDLFNANQRPAVDVGISVSRVGGAAQTKALKKVSGTLKISLAQYRSLESFAMFASDLDAASKAQLNRGAHLTELLKQPQFSPYSMEQEVVSVWAGTHGKMDDLPISDVLPFEKGMLDYLDHNTDILKTIRETEDFTADTEAALDKAVEAFRETFVTSAGKPLVEKKPDEKHTTPVEQEKIVAGEK</sequence>
<organism>
    <name type="scientific">Bifidobacterium adolescentis (strain ATCC 15703 / DSM 20083 / NCTC 11814 / E194a)</name>
    <dbReference type="NCBI Taxonomy" id="367928"/>
    <lineage>
        <taxon>Bacteria</taxon>
        <taxon>Bacillati</taxon>
        <taxon>Actinomycetota</taxon>
        <taxon>Actinomycetes</taxon>
        <taxon>Bifidobacteriales</taxon>
        <taxon>Bifidobacteriaceae</taxon>
        <taxon>Bifidobacterium</taxon>
    </lineage>
</organism>
<gene>
    <name evidence="1" type="primary">atpA</name>
    <name type="ordered locus">BAD_1429</name>
</gene>
<evidence type="ECO:0000255" key="1">
    <source>
        <dbReference type="HAMAP-Rule" id="MF_01346"/>
    </source>
</evidence>
<evidence type="ECO:0000256" key="2">
    <source>
        <dbReference type="SAM" id="MobiDB-lite"/>
    </source>
</evidence>
<feature type="chain" id="PRO_0000302629" description="ATP synthase subunit alpha">
    <location>
        <begin position="1"/>
        <end position="542"/>
    </location>
</feature>
<feature type="region of interest" description="Disordered" evidence="2">
    <location>
        <begin position="518"/>
        <end position="542"/>
    </location>
</feature>
<feature type="compositionally biased region" description="Basic and acidic residues" evidence="2">
    <location>
        <begin position="519"/>
        <end position="542"/>
    </location>
</feature>
<feature type="binding site" evidence="1">
    <location>
        <begin position="173"/>
        <end position="180"/>
    </location>
    <ligand>
        <name>ATP</name>
        <dbReference type="ChEBI" id="CHEBI:30616"/>
    </ligand>
</feature>
<feature type="site" description="Required for activity" evidence="1">
    <location>
        <position position="374"/>
    </location>
</feature>